<comment type="function">
    <text evidence="3 5 6">Cytochrome P450 monooxygenase that is involved in the biosynthesis of ganoderic acids (GA), a group of highly oxygenated lanostane-type triterpenoids which well recognized as a main group of unique bioactive compounds in the medicinal mushroom Ganoderma lucidum (PubMed:29476632, PubMed:31449331, PubMed:31865439). CYP5150L8 alone is able to catalyze the three-step oxidations at C-26 from lanosterol to 3-hydroxy-lanosta-8,24-dien-26-oic acid (also called ganoderic acid Z or HLDOA) (PubMed:29476632). The methyl group of lanosterol at C-26 is first oxidized into hydroxyl group to form 3-hydroxy-lanosta-8,24-dien-26-ol (HLDO) (PubMed:29476632). The hydroxyl group at C-26 of HLDO is further converted into a formyl group to form 3-hydroxy-lanosta-8,24-dien-26-al (HLDA) (PubMed:29476632). Finally, the formyl group is oxidized into a carboxyl group to produce 3-hydroxy-lanosta-8,24-dien-26-oic acid (HLDOA) (PubMed:29476632).</text>
</comment>
<comment type="catalytic activity">
    <reaction evidence="3">
        <text>lanosterol + reduced [NADPH--hemoprotein reductase] + O2 = 26-hydroxylanosterol + oxidized [NADPH--hemoprotein reductase] + H2O + H(+)</text>
        <dbReference type="Rhea" id="RHEA:68720"/>
        <dbReference type="Rhea" id="RHEA-COMP:11964"/>
        <dbReference type="Rhea" id="RHEA-COMP:11965"/>
        <dbReference type="ChEBI" id="CHEBI:15377"/>
        <dbReference type="ChEBI" id="CHEBI:15378"/>
        <dbReference type="ChEBI" id="CHEBI:15379"/>
        <dbReference type="ChEBI" id="CHEBI:16521"/>
        <dbReference type="ChEBI" id="CHEBI:57618"/>
        <dbReference type="ChEBI" id="CHEBI:58210"/>
        <dbReference type="ChEBI" id="CHEBI:178023"/>
    </reaction>
    <physiologicalReaction direction="left-to-right" evidence="3">
        <dbReference type="Rhea" id="RHEA:68721"/>
    </physiologicalReaction>
</comment>
<comment type="catalytic activity">
    <reaction evidence="3">
        <text>26-hydroxylanosterol + reduced [NADPH--hemoprotein reductase] + O2 = 26-oxolanosterol + oxidized [NADPH--hemoprotein reductase] + 2 H2O + H(+)</text>
        <dbReference type="Rhea" id="RHEA:68724"/>
        <dbReference type="Rhea" id="RHEA-COMP:11964"/>
        <dbReference type="Rhea" id="RHEA-COMP:11965"/>
        <dbReference type="ChEBI" id="CHEBI:15377"/>
        <dbReference type="ChEBI" id="CHEBI:15378"/>
        <dbReference type="ChEBI" id="CHEBI:15379"/>
        <dbReference type="ChEBI" id="CHEBI:57618"/>
        <dbReference type="ChEBI" id="CHEBI:58210"/>
        <dbReference type="ChEBI" id="CHEBI:178023"/>
        <dbReference type="ChEBI" id="CHEBI:178024"/>
    </reaction>
    <physiologicalReaction direction="left-to-right" evidence="3">
        <dbReference type="Rhea" id="RHEA:68725"/>
    </physiologicalReaction>
</comment>
<comment type="catalytic activity">
    <reaction evidence="3">
        <text>26-oxolanosterol + reduced [NADPH--hemoprotein reductase] + O2 = 3beta-hydroxy-lanosta-8, 24-dien-26-oate + oxidized [NADPH--hemoprotein reductase] + H2O + 2 H(+)</text>
        <dbReference type="Rhea" id="RHEA:68728"/>
        <dbReference type="Rhea" id="RHEA-COMP:11964"/>
        <dbReference type="Rhea" id="RHEA-COMP:11965"/>
        <dbReference type="ChEBI" id="CHEBI:15377"/>
        <dbReference type="ChEBI" id="CHEBI:15378"/>
        <dbReference type="ChEBI" id="CHEBI:15379"/>
        <dbReference type="ChEBI" id="CHEBI:57618"/>
        <dbReference type="ChEBI" id="CHEBI:58210"/>
        <dbReference type="ChEBI" id="CHEBI:178024"/>
        <dbReference type="ChEBI" id="CHEBI:178025"/>
    </reaction>
    <physiologicalReaction direction="left-to-right" evidence="3">
        <dbReference type="Rhea" id="RHEA:68729"/>
    </physiologicalReaction>
</comment>
<comment type="cofactor">
    <cofactor evidence="1">
        <name>heme</name>
        <dbReference type="ChEBI" id="CHEBI:30413"/>
    </cofactor>
</comment>
<comment type="pathway">
    <text evidence="3 5">Secondary metabolite biosynthesis; terpenoid biosynthesis.</text>
</comment>
<comment type="subcellular location">
    <subcellularLocation>
        <location evidence="2">Membrane</location>
        <topology evidence="2">Single-pass membrane protein</topology>
    </subcellularLocation>
</comment>
<comment type="induction">
    <text evidence="4">Expression is induced in ganoderic acid (GA) producing conditions.</text>
</comment>
<comment type="disruption phenotype">
    <text evidence="6">Leads to a significant decrease in the titer of the 4 ganoderic acids Mk, T, S and Me.</text>
</comment>
<comment type="similarity">
    <text evidence="8">Belongs to the cytochrome P450 family.</text>
</comment>
<sequence>MPDSSLVLVAIAGAAYIFWLVFHRYLVRSPLDNLPSPPSSPFLGNLPDIIHRQSHLWWRHVSNTYGPATKLTAFFGIQMLYTFDPKAMYSILVKDTELYPKKTAAYDDFTLFIGPGLLFAEGAQHRRQRKWLNPVFSVAQLRDVSHVFYGVAYKLEEAIRNRVGAQSQNLDVNGWMARTTLEMLGQAGLGYSFDKFTEDSTDSYGEALKSFFPVINHVPLLNLFVMTLANHIPKWLMRRVLRLAVPFPHVLRLLRISETMQKRSSEIIQQKKTALQKGDKALIHQVGEGKDIMSVLLKSNMNAPSDSEKLPDEELLAQMSTFILAGMDTTSNALSRILHLLAEHPDVQEKLRHELSEAREIVGNGKDVPYDDLVKLPYLDAVCRETLRLHPPLNLIGRRAAKDMVVPLSSPVRGRDGTLVNEVTLPKDTFVLLGLQACNTNKKLWGEDAYEWKPERWLQPLPSMLEEARVPGVYSNLMSFSGGVRSCIGFKFSQLEMKVLLTILLPAFSFELTEKPIFWNTSAVSYPTMDKDSTRPEMLLKVKALAC</sequence>
<dbReference type="EC" id="1.-.-.-" evidence="3"/>
<dbReference type="EMBL" id="MF175172">
    <property type="protein sequence ID" value="AVZ44872.1"/>
    <property type="molecule type" value="mRNA"/>
</dbReference>
<dbReference type="SMR" id="A0A2R4SBW0"/>
<dbReference type="UniPathway" id="UPA00213"/>
<dbReference type="GO" id="GO:0016020">
    <property type="term" value="C:membrane"/>
    <property type="evidence" value="ECO:0007669"/>
    <property type="project" value="UniProtKB-SubCell"/>
</dbReference>
<dbReference type="GO" id="GO:0020037">
    <property type="term" value="F:heme binding"/>
    <property type="evidence" value="ECO:0007669"/>
    <property type="project" value="InterPro"/>
</dbReference>
<dbReference type="GO" id="GO:0005506">
    <property type="term" value="F:iron ion binding"/>
    <property type="evidence" value="ECO:0007669"/>
    <property type="project" value="InterPro"/>
</dbReference>
<dbReference type="GO" id="GO:0004497">
    <property type="term" value="F:monooxygenase activity"/>
    <property type="evidence" value="ECO:0007669"/>
    <property type="project" value="UniProtKB-KW"/>
</dbReference>
<dbReference type="GO" id="GO:0016705">
    <property type="term" value="F:oxidoreductase activity, acting on paired donors, with incorporation or reduction of molecular oxygen"/>
    <property type="evidence" value="ECO:0007669"/>
    <property type="project" value="InterPro"/>
</dbReference>
<dbReference type="GO" id="GO:0016114">
    <property type="term" value="P:terpenoid biosynthetic process"/>
    <property type="evidence" value="ECO:0007669"/>
    <property type="project" value="UniProtKB-UniPathway"/>
</dbReference>
<dbReference type="CDD" id="cd11069">
    <property type="entry name" value="CYP_FUM15-like"/>
    <property type="match status" value="1"/>
</dbReference>
<dbReference type="Gene3D" id="1.10.630.10">
    <property type="entry name" value="Cytochrome P450"/>
    <property type="match status" value="1"/>
</dbReference>
<dbReference type="InterPro" id="IPR001128">
    <property type="entry name" value="Cyt_P450"/>
</dbReference>
<dbReference type="InterPro" id="IPR017972">
    <property type="entry name" value="Cyt_P450_CS"/>
</dbReference>
<dbReference type="InterPro" id="IPR002401">
    <property type="entry name" value="Cyt_P450_E_grp-I"/>
</dbReference>
<dbReference type="InterPro" id="IPR036396">
    <property type="entry name" value="Cyt_P450_sf"/>
</dbReference>
<dbReference type="InterPro" id="IPR050121">
    <property type="entry name" value="Cytochrome_P450_monoxygenase"/>
</dbReference>
<dbReference type="PANTHER" id="PTHR24305">
    <property type="entry name" value="CYTOCHROME P450"/>
    <property type="match status" value="1"/>
</dbReference>
<dbReference type="PANTHER" id="PTHR24305:SF166">
    <property type="entry name" value="CYTOCHROME P450 12A4, MITOCHONDRIAL-RELATED"/>
    <property type="match status" value="1"/>
</dbReference>
<dbReference type="Pfam" id="PF00067">
    <property type="entry name" value="p450"/>
    <property type="match status" value="1"/>
</dbReference>
<dbReference type="PRINTS" id="PR00463">
    <property type="entry name" value="EP450I"/>
</dbReference>
<dbReference type="PRINTS" id="PR00385">
    <property type="entry name" value="P450"/>
</dbReference>
<dbReference type="SUPFAM" id="SSF48264">
    <property type="entry name" value="Cytochrome P450"/>
    <property type="match status" value="1"/>
</dbReference>
<dbReference type="PROSITE" id="PS00086">
    <property type="entry name" value="CYTOCHROME_P450"/>
    <property type="match status" value="1"/>
</dbReference>
<accession>A0A2R4SBW0</accession>
<keyword id="KW-0349">Heme</keyword>
<keyword id="KW-0408">Iron</keyword>
<keyword id="KW-0472">Membrane</keyword>
<keyword id="KW-0479">Metal-binding</keyword>
<keyword id="KW-0503">Monooxygenase</keyword>
<keyword id="KW-0560">Oxidoreductase</keyword>
<keyword id="KW-0812">Transmembrane</keyword>
<keyword id="KW-1133">Transmembrane helix</keyword>
<proteinExistence type="evidence at protein level"/>
<organism>
    <name type="scientific">Ganoderma lucidum</name>
    <name type="common">Ling zhi medicinal fungus</name>
    <name type="synonym">Bracket fungus</name>
    <dbReference type="NCBI Taxonomy" id="5315"/>
    <lineage>
        <taxon>Eukaryota</taxon>
        <taxon>Fungi</taxon>
        <taxon>Dikarya</taxon>
        <taxon>Basidiomycota</taxon>
        <taxon>Agaricomycotina</taxon>
        <taxon>Agaricomycetes</taxon>
        <taxon>Polyporales</taxon>
        <taxon>Polyporaceae</taxon>
        <taxon>Ganoderma</taxon>
    </lineage>
</organism>
<feature type="chain" id="PRO_0000454388" description="Ganoderic acid synthetase CYP5150L8">
    <location>
        <begin position="1"/>
        <end position="547"/>
    </location>
</feature>
<feature type="transmembrane region" description="Helical" evidence="2">
    <location>
        <begin position="2"/>
        <end position="22"/>
    </location>
</feature>
<feature type="binding site" description="axial binding residue" evidence="1">
    <location>
        <position position="487"/>
    </location>
    <ligand>
        <name>heme</name>
        <dbReference type="ChEBI" id="CHEBI:30413"/>
    </ligand>
    <ligandPart>
        <name>Fe</name>
        <dbReference type="ChEBI" id="CHEBI:18248"/>
    </ligandPart>
</feature>
<evidence type="ECO:0000250" key="1">
    <source>
        <dbReference type="UniProtKB" id="P04798"/>
    </source>
</evidence>
<evidence type="ECO:0000255" key="2"/>
<evidence type="ECO:0000269" key="3">
    <source>
    </source>
</evidence>
<evidence type="ECO:0000269" key="4">
    <source>
    </source>
</evidence>
<evidence type="ECO:0000269" key="5">
    <source>
    </source>
</evidence>
<evidence type="ECO:0000269" key="6">
    <source>
    </source>
</evidence>
<evidence type="ECO:0000303" key="7">
    <source>
    </source>
</evidence>
<evidence type="ECO:0000305" key="8"/>
<name>CYPL8_GANLU</name>
<protein>
    <recommendedName>
        <fullName evidence="7">Ganoderic acid synthetase CYP5150L8</fullName>
        <ecNumber evidence="3">1.-.-.-</ecNumber>
    </recommendedName>
    <alternativeName>
        <fullName evidence="7">Cytochrome P450 monooxygenase CYP5150L8</fullName>
    </alternativeName>
</protein>
<gene>
    <name evidence="7" type="primary">CYP5150L8</name>
</gene>
<reference key="1">
    <citation type="submission" date="2017-05" db="EMBL/GenBank/DDBJ databases">
        <title>Production of Ganoderic acid Z in engineered yeast.</title>
        <authorList>
            <person name="Cai P."/>
        </authorList>
    </citation>
    <scope>NUCLEOTIDE SEQUENCE [MRNA]</scope>
    <source>
        <strain>260125-1</strain>
    </source>
</reference>
<reference key="2">
    <citation type="journal article" date="2018" name="Biotechnol. Bioeng.">
        <title>Biosynthesis of a ganoderic acid in Saccharomyces cerevisiae by expressing a cytochrome P450 gene from Ganoderma lucidum.</title>
        <authorList>
            <person name="Wang W.F."/>
            <person name="Xiao H."/>
            <person name="Zhong J.J."/>
        </authorList>
    </citation>
    <scope>FUNCTION</scope>
    <scope>CATALYTIC ACTIVITY</scope>
    <scope>PATHWAY</scope>
</reference>
<reference key="3">
    <citation type="journal article" date="2019" name="Biotechnol. Bioeng.">
        <title>Efficient biosynthesis of antitumor ganoderic acid HLDOA using a dual tunable system for optimizing the expression of CYP5150L8 and a Ganoderma P450 reductase.</title>
        <authorList>
            <person name="Lan X."/>
            <person name="Yuan W."/>
            <person name="Wang M."/>
            <person name="Xiao H."/>
        </authorList>
    </citation>
    <scope>FUNCTION</scope>
    <scope>PATHWAY</scope>
</reference>
<reference key="4">
    <citation type="journal article" date="2019" name="Microb. Biotechnol.">
        <title>Enhanced production of individual ganoderic acids by integrating Vitreoscilla haemoglobin expression and calcium ion induction in liquid static cultures of Ganoderma lingzhi.</title>
        <authorList>
            <person name="Xu J.W."/>
            <person name="Yue T.H."/>
            <person name="Yu X."/>
            <person name="Zhao P."/>
            <person name="Li T."/>
            <person name="Li N."/>
        </authorList>
    </citation>
    <scope>INDUCTION</scope>
</reference>
<reference key="5">
    <citation type="journal article" date="2020" name="Appl. Microbiol. Biotechnol.">
        <title>CRISPR-Cas9 assisted functional gene editing in the mushroom Ganoderma lucidum.</title>
        <authorList>
            <person name="Wang P.A."/>
            <person name="Xiao H."/>
            <person name="Zhong J.J."/>
        </authorList>
    </citation>
    <scope>FUNCTION</scope>
    <scope>DISRUPTION PHENOTYPE</scope>
</reference>